<reference key="1">
    <citation type="journal article" date="2007" name="Science">
        <title>Genome sequence of Aedes aegypti, a major arbovirus vector.</title>
        <authorList>
            <person name="Nene V."/>
            <person name="Wortman J.R."/>
            <person name="Lawson D."/>
            <person name="Haas B.J."/>
            <person name="Kodira C.D."/>
            <person name="Tu Z.J."/>
            <person name="Loftus B.J."/>
            <person name="Xi Z."/>
            <person name="Megy K."/>
            <person name="Grabherr M."/>
            <person name="Ren Q."/>
            <person name="Zdobnov E.M."/>
            <person name="Lobo N.F."/>
            <person name="Campbell K.S."/>
            <person name="Brown S.E."/>
            <person name="Bonaldo M.F."/>
            <person name="Zhu J."/>
            <person name="Sinkins S.P."/>
            <person name="Hogenkamp D.G."/>
            <person name="Amedeo P."/>
            <person name="Arensburger P."/>
            <person name="Atkinson P.W."/>
            <person name="Bidwell S.L."/>
            <person name="Biedler J."/>
            <person name="Birney E."/>
            <person name="Bruggner R.V."/>
            <person name="Costas J."/>
            <person name="Coy M.R."/>
            <person name="Crabtree J."/>
            <person name="Crawford M."/>
            <person name="DeBruyn B."/>
            <person name="DeCaprio D."/>
            <person name="Eiglmeier K."/>
            <person name="Eisenstadt E."/>
            <person name="El-Dorry H."/>
            <person name="Gelbart W.M."/>
            <person name="Gomes S.L."/>
            <person name="Hammond M."/>
            <person name="Hannick L.I."/>
            <person name="Hogan J.R."/>
            <person name="Holmes M.H."/>
            <person name="Jaffe D."/>
            <person name="Johnston S.J."/>
            <person name="Kennedy R.C."/>
            <person name="Koo H."/>
            <person name="Kravitz S."/>
            <person name="Kriventseva E.V."/>
            <person name="Kulp D."/>
            <person name="Labutti K."/>
            <person name="Lee E."/>
            <person name="Li S."/>
            <person name="Lovin D.D."/>
            <person name="Mao C."/>
            <person name="Mauceli E."/>
            <person name="Menck C.F."/>
            <person name="Miller J.R."/>
            <person name="Montgomery P."/>
            <person name="Mori A."/>
            <person name="Nascimento A.L."/>
            <person name="Naveira H.F."/>
            <person name="Nusbaum C."/>
            <person name="O'Leary S.B."/>
            <person name="Orvis J."/>
            <person name="Pertea M."/>
            <person name="Quesneville H."/>
            <person name="Reidenbach K.R."/>
            <person name="Rogers Y.-H.C."/>
            <person name="Roth C.W."/>
            <person name="Schneider J.R."/>
            <person name="Schatz M."/>
            <person name="Shumway M."/>
            <person name="Stanke M."/>
            <person name="Stinson E.O."/>
            <person name="Tubio J.M.C."/>
            <person name="Vanzee J.P."/>
            <person name="Verjovski-Almeida S."/>
            <person name="Werner D."/>
            <person name="White O.R."/>
            <person name="Wyder S."/>
            <person name="Zeng Q."/>
            <person name="Zhao Q."/>
            <person name="Zhao Y."/>
            <person name="Hill C.A."/>
            <person name="Raikhel A.S."/>
            <person name="Soares M.B."/>
            <person name="Knudson D.L."/>
            <person name="Lee N.H."/>
            <person name="Galagan J."/>
            <person name="Salzberg S.L."/>
            <person name="Paulsen I.T."/>
            <person name="Dimopoulos G."/>
            <person name="Collins F.H."/>
            <person name="Bruce B."/>
            <person name="Fraser-Liggett C.M."/>
            <person name="Severson D.W."/>
        </authorList>
    </citation>
    <scope>NUCLEOTIDE SEQUENCE [LARGE SCALE GENOMIC DNA]</scope>
    <source>
        <strain>LVPib12</strain>
    </source>
</reference>
<evidence type="ECO:0000250" key="1"/>
<evidence type="ECO:0000256" key="2">
    <source>
        <dbReference type="SAM" id="MobiDB-lite"/>
    </source>
</evidence>
<evidence type="ECO:0000305" key="3"/>
<accession>Q17MI0</accession>
<comment type="function">
    <text evidence="1">Component of the Mediator complex, a coactivator involved in the regulated transcription of nearly all RNA polymerase II-dependent genes. Mediator functions as a bridge to convey information from gene-specific regulatory proteins to the basal RNA polymerase II transcription machinery. Mediator is recruited to promoters by direct interactions with regulatory proteins and serves as a scaffold for the assembly of a functional preinitiation complex with RNA polymerase II and the general transcription factors (By similarity).</text>
</comment>
<comment type="subunit">
    <text evidence="1">Component of the Mediator complex.</text>
</comment>
<comment type="subcellular location">
    <subcellularLocation>
        <location evidence="1">Nucleus</location>
    </subcellularLocation>
</comment>
<comment type="similarity">
    <text evidence="3">Belongs to the Mediator complex subunit 7 family.</text>
</comment>
<organism>
    <name type="scientific">Aedes aegypti</name>
    <name type="common">Yellowfever mosquito</name>
    <name type="synonym">Culex aegypti</name>
    <dbReference type="NCBI Taxonomy" id="7159"/>
    <lineage>
        <taxon>Eukaryota</taxon>
        <taxon>Metazoa</taxon>
        <taxon>Ecdysozoa</taxon>
        <taxon>Arthropoda</taxon>
        <taxon>Hexapoda</taxon>
        <taxon>Insecta</taxon>
        <taxon>Pterygota</taxon>
        <taxon>Neoptera</taxon>
        <taxon>Endopterygota</taxon>
        <taxon>Diptera</taxon>
        <taxon>Nematocera</taxon>
        <taxon>Culicoidea</taxon>
        <taxon>Culicidae</taxon>
        <taxon>Culicinae</taxon>
        <taxon>Aedini</taxon>
        <taxon>Aedes</taxon>
        <taxon>Stegomyia</taxon>
    </lineage>
</organism>
<protein>
    <recommendedName>
        <fullName>Mediator of RNA polymerase II transcription subunit 7</fullName>
    </recommendedName>
    <alternativeName>
        <fullName>Mediator complex subunit 7</fullName>
    </alternativeName>
</protein>
<gene>
    <name type="primary">MED7</name>
    <name type="ORF">AAEL000982</name>
</gene>
<name>MED7_AEDAE</name>
<feature type="chain" id="PRO_0000303187" description="Mediator of RNA polymerase II transcription subunit 7">
    <location>
        <begin position="1"/>
        <end position="219"/>
    </location>
</feature>
<feature type="region of interest" description="Disordered" evidence="2">
    <location>
        <begin position="173"/>
        <end position="203"/>
    </location>
</feature>
<proteinExistence type="inferred from homology"/>
<sequence length="219" mass="25529">MENTDAIQVSSFPLPPAQYYKLYTDENVRNNRAPKPPAPIQGTYQMFGQQFSTEDNIIRPLEAQGFKRLYPQHFDRRKELKKLNHSLLVNFLDLIDLLVHNPDSPQRAEKIEDLNLLFVHIHHLLNEFRPHQARETLRVMMELQKRQRQETTQRFQNHLEKVREMVNNAFASLPDPAESDRLNSTVEPMDTGDDGEAGKSRGEGCHPLDRLMCELVDKM</sequence>
<dbReference type="EMBL" id="CH477205">
    <property type="protein sequence ID" value="EAT47944.1"/>
    <property type="molecule type" value="Genomic_DNA"/>
</dbReference>
<dbReference type="SMR" id="Q17MI0"/>
<dbReference type="FunCoup" id="Q17MI0">
    <property type="interactions" value="1698"/>
</dbReference>
<dbReference type="STRING" id="7159.Q17MI0"/>
<dbReference type="PaxDb" id="7159-AAEL000982-PA"/>
<dbReference type="EnsemblMetazoa" id="AAEL000982-RA">
    <property type="protein sequence ID" value="AAEL000982-PA"/>
    <property type="gene ID" value="AAEL000982"/>
</dbReference>
<dbReference type="GeneID" id="5567840"/>
<dbReference type="KEGG" id="aag:5567840"/>
<dbReference type="CTD" id="9443"/>
<dbReference type="VEuPathDB" id="VectorBase:AAEL000982"/>
<dbReference type="eggNOG" id="KOG0570">
    <property type="taxonomic scope" value="Eukaryota"/>
</dbReference>
<dbReference type="HOGENOM" id="CLU_065214_2_0_1"/>
<dbReference type="InParanoid" id="Q17MI0"/>
<dbReference type="OMA" id="IHDSYSM"/>
<dbReference type="OrthoDB" id="10253553at2759"/>
<dbReference type="PhylomeDB" id="Q17MI0"/>
<dbReference type="Proteomes" id="UP000008820">
    <property type="component" value="Chromosome 1"/>
</dbReference>
<dbReference type="Proteomes" id="UP000682892">
    <property type="component" value="Unassembled WGS sequence"/>
</dbReference>
<dbReference type="GO" id="GO:0070847">
    <property type="term" value="C:core mediator complex"/>
    <property type="evidence" value="ECO:0007669"/>
    <property type="project" value="TreeGrafter"/>
</dbReference>
<dbReference type="GO" id="GO:0016592">
    <property type="term" value="C:mediator complex"/>
    <property type="evidence" value="ECO:0007669"/>
    <property type="project" value="InterPro"/>
</dbReference>
<dbReference type="GO" id="GO:0003712">
    <property type="term" value="F:transcription coregulator activity"/>
    <property type="evidence" value="ECO:0007669"/>
    <property type="project" value="InterPro"/>
</dbReference>
<dbReference type="GO" id="GO:0006357">
    <property type="term" value="P:regulation of transcription by RNA polymerase II"/>
    <property type="evidence" value="ECO:0007669"/>
    <property type="project" value="InterPro"/>
</dbReference>
<dbReference type="Gene3D" id="6.10.140.200">
    <property type="match status" value="1"/>
</dbReference>
<dbReference type="InterPro" id="IPR037212">
    <property type="entry name" value="Med7/Med21-like"/>
</dbReference>
<dbReference type="InterPro" id="IPR009244">
    <property type="entry name" value="Mediatior_Med7"/>
</dbReference>
<dbReference type="InterPro" id="IPR044888">
    <property type="entry name" value="Mediatior_Med7_sf"/>
</dbReference>
<dbReference type="PANTHER" id="PTHR21428">
    <property type="entry name" value="MEDIATOR OF RNA POLYMERASE II TRANSCRIPTION SUBUNIT 7"/>
    <property type="match status" value="1"/>
</dbReference>
<dbReference type="PANTHER" id="PTHR21428:SF11">
    <property type="entry name" value="MEDIATOR OF RNA POLYMERASE II TRANSCRIPTION SUBUNIT 7"/>
    <property type="match status" value="1"/>
</dbReference>
<dbReference type="Pfam" id="PF05983">
    <property type="entry name" value="Med7"/>
    <property type="match status" value="1"/>
</dbReference>
<dbReference type="SUPFAM" id="SSF140718">
    <property type="entry name" value="Mediator hinge subcomplex-like"/>
    <property type="match status" value="1"/>
</dbReference>
<keyword id="KW-0010">Activator</keyword>
<keyword id="KW-0539">Nucleus</keyword>
<keyword id="KW-1185">Reference proteome</keyword>
<keyword id="KW-0804">Transcription</keyword>
<keyword id="KW-0805">Transcription regulation</keyword>